<comment type="function">
    <text>Transaldolase is important for the balance of metabolites in the pentose-phosphate pathway.</text>
</comment>
<comment type="catalytic activity">
    <reaction evidence="2">
        <text>D-sedoheptulose 7-phosphate + D-glyceraldehyde 3-phosphate = D-erythrose 4-phosphate + beta-D-fructose 6-phosphate</text>
        <dbReference type="Rhea" id="RHEA:17053"/>
        <dbReference type="ChEBI" id="CHEBI:16897"/>
        <dbReference type="ChEBI" id="CHEBI:57483"/>
        <dbReference type="ChEBI" id="CHEBI:57634"/>
        <dbReference type="ChEBI" id="CHEBI:59776"/>
        <dbReference type="EC" id="2.2.1.2"/>
    </reaction>
</comment>
<comment type="pathway">
    <text>Carbohydrate degradation; pentose phosphate pathway; D-glyceraldehyde 3-phosphate and beta-D-fructose 6-phosphate from D-ribose 5-phosphate and D-xylulose 5-phosphate (non-oxidative stage): step 2/3.</text>
</comment>
<comment type="subunit">
    <text evidence="1">Homodimer.</text>
</comment>
<comment type="similarity">
    <text evidence="3">Belongs to the transaldolase family. Type 1 subfamily.</text>
</comment>
<dbReference type="EC" id="2.2.1.2"/>
<dbReference type="PIR" id="A12872">
    <property type="entry name" value="A12872"/>
</dbReference>
<dbReference type="UniPathway" id="UPA00115">
    <property type="reaction ID" value="UER00414"/>
</dbReference>
<dbReference type="GO" id="GO:0004801">
    <property type="term" value="F:transaldolase activity"/>
    <property type="evidence" value="ECO:0007669"/>
    <property type="project" value="UniProtKB-EC"/>
</dbReference>
<dbReference type="GO" id="GO:0006098">
    <property type="term" value="P:pentose-phosphate shunt"/>
    <property type="evidence" value="ECO:0007669"/>
    <property type="project" value="UniProtKB-UniPathway"/>
</dbReference>
<organism>
    <name type="scientific">Cyberlindnera jadinii</name>
    <name type="common">Torula yeast</name>
    <name type="synonym">Pichia jadinii</name>
    <dbReference type="NCBI Taxonomy" id="4903"/>
    <lineage>
        <taxon>Eukaryota</taxon>
        <taxon>Fungi</taxon>
        <taxon>Dikarya</taxon>
        <taxon>Ascomycota</taxon>
        <taxon>Saccharomycotina</taxon>
        <taxon>Saccharomycetes</taxon>
        <taxon>Phaffomycetales</taxon>
        <taxon>Phaffomycetaceae</taxon>
        <taxon>Cyberlindnera</taxon>
    </lineage>
</organism>
<evidence type="ECO:0000250" key="1"/>
<evidence type="ECO:0000255" key="2">
    <source>
        <dbReference type="PROSITE-ProRule" id="PRU10019"/>
    </source>
</evidence>
<evidence type="ECO:0000305" key="3"/>
<sequence>HGIHCBTLL</sequence>
<reference key="1">
    <citation type="journal article" date="1977" name="Arch. Biochem. Biophys.">
        <title>Purification of crystallization of transaldolase isozyme I and evidence for different genetic origin of isozymes I and III in Candida utilis.</title>
        <authorList>
            <person name="Sun S.C."/>
            <person name="Joris L."/>
            <person name="Tsolas O."/>
        </authorList>
    </citation>
    <scope>PROTEIN SEQUENCE</scope>
</reference>
<protein>
    <recommendedName>
        <fullName>Transaldolase-1</fullName>
        <ecNumber>2.2.1.2</ecNumber>
    </recommendedName>
    <alternativeName>
        <fullName>Transaldolase I</fullName>
    </alternativeName>
</protein>
<proteinExistence type="evidence at protein level"/>
<name>TAL1_CYBJA</name>
<keyword id="KW-0903">Direct protein sequencing</keyword>
<keyword id="KW-0570">Pentose shunt</keyword>
<keyword id="KW-0704">Schiff base</keyword>
<keyword id="KW-0808">Transferase</keyword>
<accession>P17440</accession>
<feature type="chain" id="PRO_0000173571" description="Transaldolase-1">
    <location>
        <begin position="1" status="less than"/>
        <end position="9" status="greater than"/>
    </location>
</feature>
<feature type="non-terminal residue">
    <location>
        <position position="1"/>
    </location>
</feature>
<feature type="non-terminal residue">
    <location>
        <position position="9"/>
    </location>
</feature>